<organism>
    <name type="scientific">Capra hircus</name>
    <name type="common">Goat</name>
    <dbReference type="NCBI Taxonomy" id="9925"/>
    <lineage>
        <taxon>Eukaryota</taxon>
        <taxon>Metazoa</taxon>
        <taxon>Chordata</taxon>
        <taxon>Craniata</taxon>
        <taxon>Vertebrata</taxon>
        <taxon>Euteleostomi</taxon>
        <taxon>Mammalia</taxon>
        <taxon>Eutheria</taxon>
        <taxon>Laurasiatheria</taxon>
        <taxon>Artiodactyla</taxon>
        <taxon>Ruminantia</taxon>
        <taxon>Pecora</taxon>
        <taxon>Bovidae</taxon>
        <taxon>Caprinae</taxon>
        <taxon>Capra</taxon>
    </lineage>
</organism>
<sequence>MACCAPRCCSVRTGPATTICSSDQFCRCGVCLPSTCPHDISLLQPTFCDNSPVPYHVPDTYVPTCFLLNSSHPTPGLSGINLTTFIQPGCENACEPRC</sequence>
<evidence type="ECO:0000269" key="1">
    <source>
    </source>
</evidence>
<evidence type="ECO:0000305" key="2"/>
<proteinExistence type="evidence at protein level"/>
<reference key="1">
    <citation type="submission" date="2003-12" db="EMBL/GenBank/DDBJ databases">
        <authorList>
            <person name="Yin J."/>
            <person name="Li J.Q."/>
            <person name="Zhou H.M."/>
        </authorList>
    </citation>
    <scope>NUCLEOTIDE SEQUENCE [MRNA]</scope>
</reference>
<reference key="2">
    <citation type="journal article" date="1975" name="Biochem. J.">
        <title>Studies on the high-sulphur proteins of reduced mohair. The isolation and amino acid sequence of protein scmkb-m1.2.</title>
        <authorList>
            <person name="Parris D."/>
            <person name="Swart L.S."/>
        </authorList>
    </citation>
    <scope>PROTEIN SEQUENCE OF 2-98</scope>
    <scope>ACETYLATION AT ALA-2</scope>
    <source>
        <strain>South African angora</strain>
    </source>
</reference>
<name>KRA31_CAPHI</name>
<keyword id="KW-0007">Acetylation</keyword>
<keyword id="KW-0903">Direct protein sequencing</keyword>
<keyword id="KW-0416">Keratin</keyword>
<keyword id="KW-1185">Reference proteome</keyword>
<keyword id="KW-0677">Repeat</keyword>
<dbReference type="EMBL" id="AY510120">
    <property type="protein sequence ID" value="AAS00527.1"/>
    <property type="molecule type" value="mRNA"/>
</dbReference>
<dbReference type="PIR" id="A02845">
    <property type="entry name" value="KRGTHM"/>
</dbReference>
<dbReference type="RefSeq" id="NP_001272703.1">
    <property type="nucleotide sequence ID" value="NM_001285774.1"/>
</dbReference>
<dbReference type="STRING" id="9925.ENSCHIP00000001041"/>
<dbReference type="iPTMnet" id="P02447"/>
<dbReference type="GeneID" id="100861180"/>
<dbReference type="KEGG" id="chx:100861180"/>
<dbReference type="CTD" id="83896"/>
<dbReference type="OrthoDB" id="9446518at2759"/>
<dbReference type="Proteomes" id="UP000291000">
    <property type="component" value="Unassembled WGS sequence"/>
</dbReference>
<dbReference type="Proteomes" id="UP000694566">
    <property type="component" value="Unplaced"/>
</dbReference>
<dbReference type="GO" id="GO:0005829">
    <property type="term" value="C:cytosol"/>
    <property type="evidence" value="ECO:0007669"/>
    <property type="project" value="UniProtKB-ARBA"/>
</dbReference>
<dbReference type="GO" id="GO:0045095">
    <property type="term" value="C:keratin filament"/>
    <property type="evidence" value="ECO:0007669"/>
    <property type="project" value="InterPro"/>
</dbReference>
<dbReference type="GO" id="GO:0005198">
    <property type="term" value="F:structural molecule activity"/>
    <property type="evidence" value="ECO:0007669"/>
    <property type="project" value="InterPro"/>
</dbReference>
<dbReference type="InterPro" id="IPR007659">
    <property type="entry name" value="Keratin_matx"/>
</dbReference>
<dbReference type="PANTHER" id="PTHR23260">
    <property type="entry name" value="KERATIN ASSOCIATED PROTEIN 3-3-RELATED"/>
    <property type="match status" value="1"/>
</dbReference>
<dbReference type="PANTHER" id="PTHR23260:SF3">
    <property type="entry name" value="KERATIN-ASSOCIATED PROTEIN 3-1"/>
    <property type="match status" value="1"/>
</dbReference>
<dbReference type="Pfam" id="PF04579">
    <property type="entry name" value="Keratin_matx"/>
    <property type="match status" value="1"/>
</dbReference>
<feature type="initiator methionine" description="Removed" evidence="1">
    <location>
        <position position="1"/>
    </location>
</feature>
<feature type="chain" id="PRO_0000185164" description="Keratin-associated protein 3-1">
    <location>
        <begin position="2"/>
        <end position="98"/>
    </location>
</feature>
<feature type="repeat" description="1">
    <location>
        <begin position="3"/>
        <end position="7"/>
    </location>
</feature>
<feature type="repeat" description="2">
    <location>
        <begin position="8"/>
        <end position="12"/>
    </location>
</feature>
<feature type="repeat" description="3">
    <location>
        <begin position="47"/>
        <end position="51"/>
    </location>
</feature>
<feature type="repeat" description="4">
    <location>
        <begin position="55"/>
        <end position="59"/>
    </location>
</feature>
<feature type="region of interest" description="4 X 5 AA repeats of C-C-X(3)">
    <location>
        <begin position="3"/>
        <end position="59"/>
    </location>
</feature>
<feature type="modified residue" description="N-acetylalanine" evidence="1">
    <location>
        <position position="2"/>
    </location>
</feature>
<feature type="sequence conflict" description="In Ref. 2; AA sequence." evidence="2" ref="2">
    <original>Q</original>
    <variation>K</variation>
    <location>
        <position position="24"/>
    </location>
</feature>
<accession>P02447</accession>
<accession>Q6R641</accession>
<protein>
    <recommendedName>
        <fullName>Keratin-associated protein 3-1</fullName>
    </recommendedName>
    <alternativeName>
        <fullName>Keratin, high sulfur matrix protein, IIIB2</fullName>
    </alternativeName>
    <alternativeName>
        <fullName>Keratin-associated protein 3.2</fullName>
    </alternativeName>
    <alternativeName>
        <fullName>M1.2 protein</fullName>
    </alternativeName>
</protein>
<comment type="function">
    <text>In the wool cortex, wool keratin intermediate filaments are embedded in an interfilamentous matrix, consisting of hair keratin-associated proteins (KRTAP), which are essential for the formation of a rigid and resistant wool shaft through their extensive disulfide bond cross-linking with abundant cysteine residues of wool keratins. The matrix proteins include the high-sulfur and high-glycine-tyrosine keratins.</text>
</comment>
<comment type="subunit">
    <text>Interacts with wool keratins.</text>
</comment>
<comment type="tissue specificity">
    <text>Wool.</text>
</comment>
<comment type="similarity">
    <text evidence="2">Belongs to the KRTAP type 3 family.</text>
</comment>
<gene>
    <name type="primary">KRTAP3-1</name>
</gene>